<name>Y606_LACH4</name>
<reference key="1">
    <citation type="journal article" date="2008" name="J. Bacteriol.">
        <title>Genome sequence of Lactobacillus helveticus: an organism distinguished by selective gene loss and IS element expansion.</title>
        <authorList>
            <person name="Callanan M."/>
            <person name="Kaleta P."/>
            <person name="O'Callaghan J."/>
            <person name="O'Sullivan O."/>
            <person name="Jordan K."/>
            <person name="McAuliffe O."/>
            <person name="Sangrador-Vegas A."/>
            <person name="Slattery L."/>
            <person name="Fitzgerald G.F."/>
            <person name="Beresford T."/>
            <person name="Ross R.P."/>
        </authorList>
    </citation>
    <scope>NUCLEOTIDE SEQUENCE [LARGE SCALE GENOMIC DNA]</scope>
    <source>
        <strain>DPC 4571</strain>
    </source>
</reference>
<evidence type="ECO:0000255" key="1">
    <source>
        <dbReference type="HAMAP-Rule" id="MF_01221"/>
    </source>
</evidence>
<comment type="subunit">
    <text evidence="1">Homodimer.</text>
</comment>
<comment type="similarity">
    <text evidence="1">Belongs to the UPF0210 family.</text>
</comment>
<sequence length="447" mass="46930">METKQILETIQMISEEKLDIRTITMGISLFDCIDSDGVKARQKIYDKLTTSAKDLVKVADRIESEYGIPIVNKRISVTPISMIAAACHDDNYVAYAQTMEKAAETLGVDLIGGFSALVQKGYQSGDRKLIASMPEALSETQRVCGSVNVGSTRAGINMDAVKQMGQVVKDLSEIDPVSCMSLVIFSNAVEDNPFMAGAFHGVGEADKVINVGISGPGVVKRALEQVKGESIDTVSETIKKTAFKVTRMGQFVGNVAAKALNVPFGIVDLSLAPTPSQGDSVAEILEEIGLESVGAPGTTAALALLNDAVKKGGVMACEHVGGLSGAFIPVSEDSGMIKAVEHGNLNLEKLEAMTAVCSVGLDMVAVPGDTPAETISGMIADEAAIGVINNKTTAVRVIPAKGKQVGEQIDFGGIFGYAPVMPVNTNSPAKFVQRGGRIPAPIHSFKN</sequence>
<feature type="chain" id="PRO_1000073150" description="UPF0210 protein lhv_0606">
    <location>
        <begin position="1"/>
        <end position="447"/>
    </location>
</feature>
<protein>
    <recommendedName>
        <fullName evidence="1">UPF0210 protein lhv_0606</fullName>
    </recommendedName>
</protein>
<organism>
    <name type="scientific">Lactobacillus helveticus (strain DPC 4571)</name>
    <dbReference type="NCBI Taxonomy" id="405566"/>
    <lineage>
        <taxon>Bacteria</taxon>
        <taxon>Bacillati</taxon>
        <taxon>Bacillota</taxon>
        <taxon>Bacilli</taxon>
        <taxon>Lactobacillales</taxon>
        <taxon>Lactobacillaceae</taxon>
        <taxon>Lactobacillus</taxon>
    </lineage>
</organism>
<dbReference type="EMBL" id="CP000517">
    <property type="protein sequence ID" value="ABX26775.1"/>
    <property type="molecule type" value="Genomic_DNA"/>
</dbReference>
<dbReference type="RefSeq" id="WP_003626829.1">
    <property type="nucleotide sequence ID" value="NC_010080.1"/>
</dbReference>
<dbReference type="SMR" id="A8YU37"/>
<dbReference type="KEGG" id="lhe:lhv_0606"/>
<dbReference type="eggNOG" id="COG2848">
    <property type="taxonomic scope" value="Bacteria"/>
</dbReference>
<dbReference type="HOGENOM" id="CLU_048704_0_0_9"/>
<dbReference type="Proteomes" id="UP000000790">
    <property type="component" value="Chromosome"/>
</dbReference>
<dbReference type="CDD" id="cd08025">
    <property type="entry name" value="RNR_PFL_like_DUF711"/>
    <property type="match status" value="1"/>
</dbReference>
<dbReference type="Gene3D" id="3.20.70.20">
    <property type="match status" value="1"/>
</dbReference>
<dbReference type="HAMAP" id="MF_01221">
    <property type="entry name" value="UPF0210"/>
    <property type="match status" value="1"/>
</dbReference>
<dbReference type="InterPro" id="IPR007841">
    <property type="entry name" value="UPF0210"/>
</dbReference>
<dbReference type="NCBIfam" id="NF003700">
    <property type="entry name" value="PRK05313.1"/>
    <property type="match status" value="1"/>
</dbReference>
<dbReference type="PANTHER" id="PTHR37560:SF1">
    <property type="entry name" value="UPF0210 PROTEIN MJ1665"/>
    <property type="match status" value="1"/>
</dbReference>
<dbReference type="PANTHER" id="PTHR37560">
    <property type="entry name" value="UPF0210 PROTEIN SPR0218"/>
    <property type="match status" value="1"/>
</dbReference>
<dbReference type="Pfam" id="PF05167">
    <property type="entry name" value="DUF711"/>
    <property type="match status" value="1"/>
</dbReference>
<dbReference type="SUPFAM" id="SSF51998">
    <property type="entry name" value="PFL-like glycyl radical enzymes"/>
    <property type="match status" value="1"/>
</dbReference>
<proteinExistence type="inferred from homology"/>
<gene>
    <name type="ordered locus">lhv_0606</name>
</gene>
<accession>A8YU37</accession>